<reference key="1">
    <citation type="journal article" date="2007" name="BMC Microbiol.">
        <title>Subtle genetic changes enhance virulence of methicillin resistant and sensitive Staphylococcus aureus.</title>
        <authorList>
            <person name="Highlander S.K."/>
            <person name="Hulten K.G."/>
            <person name="Qin X."/>
            <person name="Jiang H."/>
            <person name="Yerrapragada S."/>
            <person name="Mason E.O. Jr."/>
            <person name="Shang Y."/>
            <person name="Williams T.M."/>
            <person name="Fortunov R.M."/>
            <person name="Liu Y."/>
            <person name="Igboeli O."/>
            <person name="Petrosino J."/>
            <person name="Tirumalai M."/>
            <person name="Uzman A."/>
            <person name="Fox G.E."/>
            <person name="Cardenas A.M."/>
            <person name="Muzny D.M."/>
            <person name="Hemphill L."/>
            <person name="Ding Y."/>
            <person name="Dugan S."/>
            <person name="Blyth P.R."/>
            <person name="Buhay C.J."/>
            <person name="Dinh H.H."/>
            <person name="Hawes A.C."/>
            <person name="Holder M."/>
            <person name="Kovar C.L."/>
            <person name="Lee S.L."/>
            <person name="Liu W."/>
            <person name="Nazareth L.V."/>
            <person name="Wang Q."/>
            <person name="Zhou J."/>
            <person name="Kaplan S.L."/>
            <person name="Weinstock G.M."/>
        </authorList>
    </citation>
    <scope>NUCLEOTIDE SEQUENCE [LARGE SCALE GENOMIC DNA]</scope>
    <source>
        <strain>USA300 / TCH1516</strain>
    </source>
</reference>
<dbReference type="EC" id="6.3.2.4" evidence="2"/>
<dbReference type="EMBL" id="CP000730">
    <property type="protein sequence ID" value="ABX30075.1"/>
    <property type="molecule type" value="Genomic_DNA"/>
</dbReference>
<dbReference type="RefSeq" id="WP_000159631.1">
    <property type="nucleotide sequence ID" value="NC_010079.1"/>
</dbReference>
<dbReference type="SMR" id="A8Z4Y6"/>
<dbReference type="KEGG" id="sax:USA300HOU_2078"/>
<dbReference type="HOGENOM" id="CLU_039268_0_0_9"/>
<dbReference type="UniPathway" id="UPA00219"/>
<dbReference type="GO" id="GO:0005829">
    <property type="term" value="C:cytosol"/>
    <property type="evidence" value="ECO:0007669"/>
    <property type="project" value="TreeGrafter"/>
</dbReference>
<dbReference type="GO" id="GO:0005524">
    <property type="term" value="F:ATP binding"/>
    <property type="evidence" value="ECO:0007669"/>
    <property type="project" value="UniProtKB-KW"/>
</dbReference>
<dbReference type="GO" id="GO:0008716">
    <property type="term" value="F:D-alanine-D-alanine ligase activity"/>
    <property type="evidence" value="ECO:0007669"/>
    <property type="project" value="UniProtKB-UniRule"/>
</dbReference>
<dbReference type="GO" id="GO:0046872">
    <property type="term" value="F:metal ion binding"/>
    <property type="evidence" value="ECO:0007669"/>
    <property type="project" value="UniProtKB-KW"/>
</dbReference>
<dbReference type="GO" id="GO:0071555">
    <property type="term" value="P:cell wall organization"/>
    <property type="evidence" value="ECO:0007669"/>
    <property type="project" value="UniProtKB-KW"/>
</dbReference>
<dbReference type="GO" id="GO:0009252">
    <property type="term" value="P:peptidoglycan biosynthetic process"/>
    <property type="evidence" value="ECO:0007669"/>
    <property type="project" value="UniProtKB-UniRule"/>
</dbReference>
<dbReference type="GO" id="GO:0008360">
    <property type="term" value="P:regulation of cell shape"/>
    <property type="evidence" value="ECO:0007669"/>
    <property type="project" value="UniProtKB-KW"/>
</dbReference>
<dbReference type="FunFam" id="3.30.1490.20:FF:000007">
    <property type="entry name" value="D-alanine--D-alanine ligase"/>
    <property type="match status" value="1"/>
</dbReference>
<dbReference type="FunFam" id="3.30.470.20:FF:000008">
    <property type="entry name" value="D-alanine--D-alanine ligase"/>
    <property type="match status" value="1"/>
</dbReference>
<dbReference type="FunFam" id="3.40.50.20:FF:000020">
    <property type="entry name" value="D-alanine--D-alanine ligase"/>
    <property type="match status" value="1"/>
</dbReference>
<dbReference type="Gene3D" id="3.40.50.20">
    <property type="match status" value="1"/>
</dbReference>
<dbReference type="Gene3D" id="3.30.1490.20">
    <property type="entry name" value="ATP-grasp fold, A domain"/>
    <property type="match status" value="1"/>
</dbReference>
<dbReference type="Gene3D" id="3.30.470.20">
    <property type="entry name" value="ATP-grasp fold, B domain"/>
    <property type="match status" value="1"/>
</dbReference>
<dbReference type="HAMAP" id="MF_00047">
    <property type="entry name" value="Dala_Dala_lig"/>
    <property type="match status" value="1"/>
</dbReference>
<dbReference type="InterPro" id="IPR011761">
    <property type="entry name" value="ATP-grasp"/>
</dbReference>
<dbReference type="InterPro" id="IPR013815">
    <property type="entry name" value="ATP_grasp_subdomain_1"/>
</dbReference>
<dbReference type="InterPro" id="IPR000291">
    <property type="entry name" value="D-Ala_lig_Van_CS"/>
</dbReference>
<dbReference type="InterPro" id="IPR005905">
    <property type="entry name" value="D_ala_D_ala"/>
</dbReference>
<dbReference type="InterPro" id="IPR011095">
    <property type="entry name" value="Dala_Dala_lig_C"/>
</dbReference>
<dbReference type="InterPro" id="IPR011127">
    <property type="entry name" value="Dala_Dala_lig_N"/>
</dbReference>
<dbReference type="InterPro" id="IPR016185">
    <property type="entry name" value="PreATP-grasp_dom_sf"/>
</dbReference>
<dbReference type="NCBIfam" id="TIGR01205">
    <property type="entry name" value="D_ala_D_alaTIGR"/>
    <property type="match status" value="1"/>
</dbReference>
<dbReference type="NCBIfam" id="NF002526">
    <property type="entry name" value="PRK01966.1-2"/>
    <property type="match status" value="1"/>
</dbReference>
<dbReference type="NCBIfam" id="NF002528">
    <property type="entry name" value="PRK01966.1-4"/>
    <property type="match status" value="1"/>
</dbReference>
<dbReference type="PANTHER" id="PTHR23132">
    <property type="entry name" value="D-ALANINE--D-ALANINE LIGASE"/>
    <property type="match status" value="1"/>
</dbReference>
<dbReference type="PANTHER" id="PTHR23132:SF25">
    <property type="entry name" value="D-ALANINE--D-ALANINE LIGASE A"/>
    <property type="match status" value="1"/>
</dbReference>
<dbReference type="Pfam" id="PF07478">
    <property type="entry name" value="Dala_Dala_lig_C"/>
    <property type="match status" value="1"/>
</dbReference>
<dbReference type="Pfam" id="PF01820">
    <property type="entry name" value="Dala_Dala_lig_N"/>
    <property type="match status" value="1"/>
</dbReference>
<dbReference type="PIRSF" id="PIRSF039102">
    <property type="entry name" value="Ddl/VanB"/>
    <property type="match status" value="1"/>
</dbReference>
<dbReference type="SUPFAM" id="SSF56059">
    <property type="entry name" value="Glutathione synthetase ATP-binding domain-like"/>
    <property type="match status" value="1"/>
</dbReference>
<dbReference type="SUPFAM" id="SSF52440">
    <property type="entry name" value="PreATP-grasp domain"/>
    <property type="match status" value="1"/>
</dbReference>
<dbReference type="PROSITE" id="PS50975">
    <property type="entry name" value="ATP_GRASP"/>
    <property type="match status" value="1"/>
</dbReference>
<dbReference type="PROSITE" id="PS00843">
    <property type="entry name" value="DALA_DALA_LIGASE_1"/>
    <property type="match status" value="1"/>
</dbReference>
<dbReference type="PROSITE" id="PS00844">
    <property type="entry name" value="DALA_DALA_LIGASE_2"/>
    <property type="match status" value="1"/>
</dbReference>
<accession>A8Z4Y6</accession>
<name>DDL_STAAT</name>
<proteinExistence type="inferred from homology"/>
<sequence>MTKENICIVFGGKSAEHEVSILTAQNVLNAIDKDKYHVDIIYITNDGDWRKQNNITAEIKSTDELHLENGEALEISQLLKESSSGQPYDAVFPLLHGPNGEDGTIQGLFEVLDVPYVGNGVLSAASSMDKLVMKQLFEHRGLPQLPYISFLRSEYEKYEHNILKLVNDKLNYPVFVKPANLGSSVGISKCNNEAELKEGIKEAFQFDRKLVIEQGVNAREIEVAVLGNDYPEATWPGEVVKDVAFYDYKSKYKDGKVQLQIPADLDEDVQLTLRNMALEAFKATDCSGLVRADFFVTEDNQIYINETNAMPGFTAFSMYPKLWENMGLSYPELITKLIELAKERHQDKQKNKYKID</sequence>
<gene>
    <name evidence="2" type="primary">ddl</name>
    <name type="ordered locus">USA300HOU_2078</name>
</gene>
<organism>
    <name type="scientific">Staphylococcus aureus (strain USA300 / TCH1516)</name>
    <dbReference type="NCBI Taxonomy" id="451516"/>
    <lineage>
        <taxon>Bacteria</taxon>
        <taxon>Bacillati</taxon>
        <taxon>Bacillota</taxon>
        <taxon>Bacilli</taxon>
        <taxon>Bacillales</taxon>
        <taxon>Staphylococcaceae</taxon>
        <taxon>Staphylococcus</taxon>
    </lineage>
</organism>
<feature type="chain" id="PRO_1000074799" description="D-alanine--D-alanine ligase">
    <location>
        <begin position="1"/>
        <end position="356"/>
    </location>
</feature>
<feature type="domain" description="ATP-grasp" evidence="2">
    <location>
        <begin position="134"/>
        <end position="339"/>
    </location>
</feature>
<feature type="binding site" evidence="2">
    <location>
        <begin position="167"/>
        <end position="222"/>
    </location>
    <ligand>
        <name>ATP</name>
        <dbReference type="ChEBI" id="CHEBI:30616"/>
    </ligand>
</feature>
<feature type="binding site" evidence="2">
    <location>
        <position position="293"/>
    </location>
    <ligand>
        <name>Mg(2+)</name>
        <dbReference type="ChEBI" id="CHEBI:18420"/>
        <label>1</label>
    </ligand>
</feature>
<feature type="binding site" evidence="2">
    <location>
        <position position="306"/>
    </location>
    <ligand>
        <name>Mg(2+)</name>
        <dbReference type="ChEBI" id="CHEBI:18420"/>
        <label>1</label>
    </ligand>
</feature>
<feature type="binding site" evidence="2">
    <location>
        <position position="306"/>
    </location>
    <ligand>
        <name>Mg(2+)</name>
        <dbReference type="ChEBI" id="CHEBI:18420"/>
        <label>2</label>
    </ligand>
</feature>
<feature type="binding site" evidence="2">
    <location>
        <position position="308"/>
    </location>
    <ligand>
        <name>Mg(2+)</name>
        <dbReference type="ChEBI" id="CHEBI:18420"/>
        <label>2</label>
    </ligand>
</feature>
<comment type="function">
    <text evidence="2">Cell wall formation.</text>
</comment>
<comment type="catalytic activity">
    <reaction evidence="2">
        <text>2 D-alanine + ATP = D-alanyl-D-alanine + ADP + phosphate + H(+)</text>
        <dbReference type="Rhea" id="RHEA:11224"/>
        <dbReference type="ChEBI" id="CHEBI:15378"/>
        <dbReference type="ChEBI" id="CHEBI:30616"/>
        <dbReference type="ChEBI" id="CHEBI:43474"/>
        <dbReference type="ChEBI" id="CHEBI:57416"/>
        <dbReference type="ChEBI" id="CHEBI:57822"/>
        <dbReference type="ChEBI" id="CHEBI:456216"/>
        <dbReference type="EC" id="6.3.2.4"/>
    </reaction>
</comment>
<comment type="cofactor">
    <cofactor evidence="1">
        <name>Mg(2+)</name>
        <dbReference type="ChEBI" id="CHEBI:18420"/>
    </cofactor>
    <cofactor evidence="1">
        <name>Mn(2+)</name>
        <dbReference type="ChEBI" id="CHEBI:29035"/>
    </cofactor>
    <text evidence="1">Binds 2 magnesium or manganese ions per subunit.</text>
</comment>
<comment type="pathway">
    <text evidence="2">Cell wall biogenesis; peptidoglycan biosynthesis.</text>
</comment>
<comment type="subcellular location">
    <subcellularLocation>
        <location evidence="2">Cytoplasm</location>
    </subcellularLocation>
</comment>
<comment type="similarity">
    <text evidence="2">Belongs to the D-alanine--D-alanine ligase family.</text>
</comment>
<keyword id="KW-0067">ATP-binding</keyword>
<keyword id="KW-0133">Cell shape</keyword>
<keyword id="KW-0961">Cell wall biogenesis/degradation</keyword>
<keyword id="KW-0963">Cytoplasm</keyword>
<keyword id="KW-0436">Ligase</keyword>
<keyword id="KW-0460">Magnesium</keyword>
<keyword id="KW-0464">Manganese</keyword>
<keyword id="KW-0479">Metal-binding</keyword>
<keyword id="KW-0547">Nucleotide-binding</keyword>
<keyword id="KW-0573">Peptidoglycan synthesis</keyword>
<protein>
    <recommendedName>
        <fullName evidence="2">D-alanine--D-alanine ligase</fullName>
        <ecNumber evidence="2">6.3.2.4</ecNumber>
    </recommendedName>
    <alternativeName>
        <fullName evidence="2">D-Ala-D-Ala ligase</fullName>
    </alternativeName>
    <alternativeName>
        <fullName evidence="2">D-alanylalanine synthetase</fullName>
    </alternativeName>
</protein>
<evidence type="ECO:0000250" key="1"/>
<evidence type="ECO:0000255" key="2">
    <source>
        <dbReference type="HAMAP-Rule" id="MF_00047"/>
    </source>
</evidence>